<organism>
    <name type="scientific">Bradyrhizobium sp. (strain ORS 278)</name>
    <dbReference type="NCBI Taxonomy" id="114615"/>
    <lineage>
        <taxon>Bacteria</taxon>
        <taxon>Pseudomonadati</taxon>
        <taxon>Pseudomonadota</taxon>
        <taxon>Alphaproteobacteria</taxon>
        <taxon>Hyphomicrobiales</taxon>
        <taxon>Nitrobacteraceae</taxon>
        <taxon>Bradyrhizobium</taxon>
    </lineage>
</organism>
<dbReference type="EC" id="7.1.1.-" evidence="1"/>
<dbReference type="EMBL" id="CU234118">
    <property type="protein sequence ID" value="CAL77937.1"/>
    <property type="molecule type" value="Genomic_DNA"/>
</dbReference>
<dbReference type="RefSeq" id="WP_011927063.1">
    <property type="nucleotide sequence ID" value="NC_009445.1"/>
</dbReference>
<dbReference type="SMR" id="A4YVL1"/>
<dbReference type="STRING" id="114615.BRADO4185"/>
<dbReference type="KEGG" id="bra:BRADO4185"/>
<dbReference type="eggNOG" id="COG0377">
    <property type="taxonomic scope" value="Bacteria"/>
</dbReference>
<dbReference type="HOGENOM" id="CLU_055737_7_0_5"/>
<dbReference type="Proteomes" id="UP000001994">
    <property type="component" value="Chromosome"/>
</dbReference>
<dbReference type="GO" id="GO:0005886">
    <property type="term" value="C:plasma membrane"/>
    <property type="evidence" value="ECO:0007669"/>
    <property type="project" value="UniProtKB-SubCell"/>
</dbReference>
<dbReference type="GO" id="GO:0045271">
    <property type="term" value="C:respiratory chain complex I"/>
    <property type="evidence" value="ECO:0007669"/>
    <property type="project" value="TreeGrafter"/>
</dbReference>
<dbReference type="GO" id="GO:0051539">
    <property type="term" value="F:4 iron, 4 sulfur cluster binding"/>
    <property type="evidence" value="ECO:0007669"/>
    <property type="project" value="UniProtKB-KW"/>
</dbReference>
<dbReference type="GO" id="GO:0005506">
    <property type="term" value="F:iron ion binding"/>
    <property type="evidence" value="ECO:0007669"/>
    <property type="project" value="UniProtKB-UniRule"/>
</dbReference>
<dbReference type="GO" id="GO:0008137">
    <property type="term" value="F:NADH dehydrogenase (ubiquinone) activity"/>
    <property type="evidence" value="ECO:0007669"/>
    <property type="project" value="InterPro"/>
</dbReference>
<dbReference type="GO" id="GO:0050136">
    <property type="term" value="F:NADH:ubiquinone reductase (non-electrogenic) activity"/>
    <property type="evidence" value="ECO:0007669"/>
    <property type="project" value="UniProtKB-UniRule"/>
</dbReference>
<dbReference type="GO" id="GO:0048038">
    <property type="term" value="F:quinone binding"/>
    <property type="evidence" value="ECO:0007669"/>
    <property type="project" value="UniProtKB-KW"/>
</dbReference>
<dbReference type="GO" id="GO:0009060">
    <property type="term" value="P:aerobic respiration"/>
    <property type="evidence" value="ECO:0007669"/>
    <property type="project" value="TreeGrafter"/>
</dbReference>
<dbReference type="GO" id="GO:0015990">
    <property type="term" value="P:electron transport coupled proton transport"/>
    <property type="evidence" value="ECO:0007669"/>
    <property type="project" value="TreeGrafter"/>
</dbReference>
<dbReference type="FunFam" id="3.40.50.12280:FF:000001">
    <property type="entry name" value="NADH-quinone oxidoreductase subunit B 2"/>
    <property type="match status" value="1"/>
</dbReference>
<dbReference type="Gene3D" id="3.40.50.12280">
    <property type="match status" value="1"/>
</dbReference>
<dbReference type="HAMAP" id="MF_01356">
    <property type="entry name" value="NDH1_NuoB"/>
    <property type="match status" value="1"/>
</dbReference>
<dbReference type="InterPro" id="IPR006137">
    <property type="entry name" value="NADH_UbQ_OxRdtase-like_20kDa"/>
</dbReference>
<dbReference type="InterPro" id="IPR006138">
    <property type="entry name" value="NADH_UQ_OxRdtase_20Kd_su"/>
</dbReference>
<dbReference type="NCBIfam" id="TIGR01957">
    <property type="entry name" value="nuoB_fam"/>
    <property type="match status" value="1"/>
</dbReference>
<dbReference type="NCBIfam" id="NF005012">
    <property type="entry name" value="PRK06411.1"/>
    <property type="match status" value="1"/>
</dbReference>
<dbReference type="PANTHER" id="PTHR11995">
    <property type="entry name" value="NADH DEHYDROGENASE"/>
    <property type="match status" value="1"/>
</dbReference>
<dbReference type="PANTHER" id="PTHR11995:SF14">
    <property type="entry name" value="NADH DEHYDROGENASE [UBIQUINONE] IRON-SULFUR PROTEIN 7, MITOCHONDRIAL"/>
    <property type="match status" value="1"/>
</dbReference>
<dbReference type="Pfam" id="PF01058">
    <property type="entry name" value="Oxidored_q6"/>
    <property type="match status" value="1"/>
</dbReference>
<dbReference type="SUPFAM" id="SSF56770">
    <property type="entry name" value="HydA/Nqo6-like"/>
    <property type="match status" value="1"/>
</dbReference>
<dbReference type="PROSITE" id="PS01150">
    <property type="entry name" value="COMPLEX1_20K"/>
    <property type="match status" value="1"/>
</dbReference>
<name>NUOB_BRASO</name>
<accession>A4YVL1</accession>
<proteinExistence type="inferred from homology"/>
<comment type="function">
    <text evidence="1">NDH-1 shuttles electrons from NADH, via FMN and iron-sulfur (Fe-S) centers, to quinones in the respiratory chain. The immediate electron acceptor for the enzyme in this species is believed to be ubiquinone. Couples the redox reaction to proton translocation (for every two electrons transferred, four hydrogen ions are translocated across the cytoplasmic membrane), and thus conserves the redox energy in a proton gradient.</text>
</comment>
<comment type="catalytic activity">
    <reaction evidence="1">
        <text>a quinone + NADH + 5 H(+)(in) = a quinol + NAD(+) + 4 H(+)(out)</text>
        <dbReference type="Rhea" id="RHEA:57888"/>
        <dbReference type="ChEBI" id="CHEBI:15378"/>
        <dbReference type="ChEBI" id="CHEBI:24646"/>
        <dbReference type="ChEBI" id="CHEBI:57540"/>
        <dbReference type="ChEBI" id="CHEBI:57945"/>
        <dbReference type="ChEBI" id="CHEBI:132124"/>
    </reaction>
</comment>
<comment type="cofactor">
    <cofactor evidence="1">
        <name>[4Fe-4S] cluster</name>
        <dbReference type="ChEBI" id="CHEBI:49883"/>
    </cofactor>
    <text evidence="1">Binds 1 [4Fe-4S] cluster.</text>
</comment>
<comment type="subunit">
    <text evidence="1">NDH-1 is composed of 14 different subunits. Subunits NuoB, C, D, E, F, and G constitute the peripheral sector of the complex.</text>
</comment>
<comment type="subcellular location">
    <subcellularLocation>
        <location evidence="1">Cell inner membrane</location>
        <topology evidence="1">Peripheral membrane protein</topology>
        <orientation evidence="1">Cytoplasmic side</orientation>
    </subcellularLocation>
</comment>
<comment type="similarity">
    <text evidence="1">Belongs to the complex I 20 kDa subunit family.</text>
</comment>
<reference key="1">
    <citation type="journal article" date="2007" name="Science">
        <title>Legumes symbioses: absence of nod genes in photosynthetic bradyrhizobia.</title>
        <authorList>
            <person name="Giraud E."/>
            <person name="Moulin L."/>
            <person name="Vallenet D."/>
            <person name="Barbe V."/>
            <person name="Cytryn E."/>
            <person name="Avarre J.-C."/>
            <person name="Jaubert M."/>
            <person name="Simon D."/>
            <person name="Cartieaux F."/>
            <person name="Prin Y."/>
            <person name="Bena G."/>
            <person name="Hannibal L."/>
            <person name="Fardoux J."/>
            <person name="Kojadinovic M."/>
            <person name="Vuillet L."/>
            <person name="Lajus A."/>
            <person name="Cruveiller S."/>
            <person name="Rouy Z."/>
            <person name="Mangenot S."/>
            <person name="Segurens B."/>
            <person name="Dossat C."/>
            <person name="Franck W.L."/>
            <person name="Chang W.-S."/>
            <person name="Saunders E."/>
            <person name="Bruce D."/>
            <person name="Richardson P."/>
            <person name="Normand P."/>
            <person name="Dreyfus B."/>
            <person name="Pignol D."/>
            <person name="Stacey G."/>
            <person name="Emerich D."/>
            <person name="Vermeglio A."/>
            <person name="Medigue C."/>
            <person name="Sadowsky M."/>
        </authorList>
    </citation>
    <scope>NUCLEOTIDE SEQUENCE [LARGE SCALE GENOMIC DNA]</scope>
    <source>
        <strain>ORS 278</strain>
    </source>
</reference>
<feature type="chain" id="PRO_0000376155" description="NADH-quinone oxidoreductase subunit B">
    <location>
        <begin position="1"/>
        <end position="193"/>
    </location>
</feature>
<feature type="binding site" evidence="1">
    <location>
        <position position="72"/>
    </location>
    <ligand>
        <name>[4Fe-4S] cluster</name>
        <dbReference type="ChEBI" id="CHEBI:49883"/>
    </ligand>
</feature>
<feature type="binding site" evidence="1">
    <location>
        <position position="73"/>
    </location>
    <ligand>
        <name>[4Fe-4S] cluster</name>
        <dbReference type="ChEBI" id="CHEBI:49883"/>
    </ligand>
</feature>
<feature type="binding site" evidence="1">
    <location>
        <position position="137"/>
    </location>
    <ligand>
        <name>[4Fe-4S] cluster</name>
        <dbReference type="ChEBI" id="CHEBI:49883"/>
    </ligand>
</feature>
<feature type="binding site" evidence="1">
    <location>
        <position position="167"/>
    </location>
    <ligand>
        <name>[4Fe-4S] cluster</name>
        <dbReference type="ChEBI" id="CHEBI:49883"/>
    </ligand>
</feature>
<protein>
    <recommendedName>
        <fullName evidence="1">NADH-quinone oxidoreductase subunit B</fullName>
        <ecNumber evidence="1">7.1.1.-</ecNumber>
    </recommendedName>
    <alternativeName>
        <fullName evidence="1">NADH dehydrogenase I subunit B</fullName>
    </alternativeName>
    <alternativeName>
        <fullName evidence="1">NDH-1 subunit B</fullName>
    </alternativeName>
</protein>
<keyword id="KW-0004">4Fe-4S</keyword>
<keyword id="KW-0997">Cell inner membrane</keyword>
<keyword id="KW-1003">Cell membrane</keyword>
<keyword id="KW-0408">Iron</keyword>
<keyword id="KW-0411">Iron-sulfur</keyword>
<keyword id="KW-0472">Membrane</keyword>
<keyword id="KW-0479">Metal-binding</keyword>
<keyword id="KW-0520">NAD</keyword>
<keyword id="KW-0874">Quinone</keyword>
<keyword id="KW-1185">Reference proteome</keyword>
<keyword id="KW-1278">Translocase</keyword>
<keyword id="KW-0813">Transport</keyword>
<keyword id="KW-0830">Ubiquinone</keyword>
<sequence length="193" mass="21140">MSPTPSSGPVIAPAPKGILDPATGRPVGAHDPYFLEVKHELSDKGFFVATADDLITWARTGSLMWMTFGLACCAVEMMQVSMPRYDVERFGFAPRASPRQSDVMIVAGTLTNKMAPALRKVYDQMPEPRYVISMGSCANGGGYYHYSYSVVRGCDRIVPIDIYVPGCPPTAEALLYGVLLLQKKIRRTGTIER</sequence>
<gene>
    <name evidence="1" type="primary">nuoB</name>
    <name type="ordered locus">BRADO4185</name>
</gene>
<evidence type="ECO:0000255" key="1">
    <source>
        <dbReference type="HAMAP-Rule" id="MF_01356"/>
    </source>
</evidence>